<sequence length="307" mass="30887">MAVQKYTVALFLAVALVAGPAASYAADAGYTPAAAATPATPAATPAAAGGKATTDEQKLLEDVNAGFKAAVAAAANAPPADKFKIFEAAFSESSKGLLATSAAKAPGLIPKLDTAYDVAYKAAEATPEAKYDAFVTALTEALRVIAGALEVHAVKPATEEVLAAKIPTGELQIVDKIDAAFKIAATAANAAPTNDKFTVFESAFNKALNECTGGAYETYKFIPSLEAAVKQAYAATVAAAPEVKYAVFEAALTKAITAMTQAQKAGKPAAAAATAAATVATAAATAAAVLPPPLLVVQSLISLLIYY</sequence>
<name>MPA5A_LOLPR</name>
<reference key="1">
    <citation type="journal article" date="1991" name="Proc. Natl. Acad. Sci. U.S.A.">
        <title>Isolation of cDNA encoding a newly identified major allergenic protein of rye-grass pollen: intracellular targeting to the amyloplast.</title>
        <authorList>
            <person name="Singh M.B."/>
            <person name="Hough T."/>
            <person name="Theerakulpisut P."/>
            <person name="Avjioglu A."/>
            <person name="Davies S."/>
            <person name="Smith P.M."/>
            <person name="Taylor P."/>
            <person name="Simpson R.J."/>
            <person name="Ward L.D."/>
            <person name="McCluskey J."/>
            <person name="Puy R."/>
            <person name="Knox R.B."/>
        </authorList>
    </citation>
    <scope>NUCLEOTIDE SEQUENCE [MRNA]</scope>
</reference>
<keyword id="KW-0020">Allergen</keyword>
<keyword id="KW-0732">Signal</keyword>
<accession>Q40240</accession>
<comment type="subcellular location">
    <text>Starch granule.</text>
</comment>
<comment type="tissue specificity">
    <text>Pollen, starch granules.</text>
</comment>
<comment type="allergen">
    <text>Causes an allergic reaction in human. Causes grass pollen allergy.</text>
</comment>
<comment type="similarity">
    <text evidence="2">Belongs to the Poa p IX/Phl p VI allergen family.</text>
</comment>
<comment type="sequence caution" evidence="2">
    <conflict type="frameshift">
        <sequence resource="EMBL-CDS" id="AAA33406"/>
    </conflict>
</comment>
<dbReference type="EMBL" id="M59163">
    <property type="protein sequence ID" value="AAA33406.1"/>
    <property type="status" value="ALT_FRAME"/>
    <property type="molecule type" value="mRNA"/>
</dbReference>
<dbReference type="PIR" id="A38582">
    <property type="entry name" value="A38582"/>
</dbReference>
<dbReference type="SMR" id="Q40240"/>
<dbReference type="Allergome" id="460">
    <property type="allergen name" value="Lol p 5"/>
</dbReference>
<dbReference type="Allergome" id="462">
    <property type="allergen name" value="Lol p 5.0102"/>
</dbReference>
<dbReference type="CDD" id="cd12805">
    <property type="entry name" value="Allergen_V_VI"/>
    <property type="match status" value="1"/>
</dbReference>
<dbReference type="Gene3D" id="1.20.120.320">
    <property type="entry name" value="Group V grass pollen allergen"/>
    <property type="match status" value="2"/>
</dbReference>
<dbReference type="InterPro" id="IPR002914">
    <property type="entry name" value="Poa_pIX/Phl_pVI"/>
</dbReference>
<dbReference type="InterPro" id="IPR035506">
    <property type="entry name" value="Pollen_allergen/Os"/>
</dbReference>
<dbReference type="Pfam" id="PF01620">
    <property type="entry name" value="Pollen_allerg_2"/>
    <property type="match status" value="2"/>
</dbReference>
<dbReference type="PRINTS" id="PR00833">
    <property type="entry name" value="POAALLERGEN"/>
</dbReference>
<dbReference type="SUPFAM" id="SSF81736">
    <property type="entry name" value="Group V grass pollen allergen"/>
    <property type="match status" value="2"/>
</dbReference>
<gene>
    <name type="primary">LOLPIB</name>
</gene>
<protein>
    <recommendedName>
        <fullName>Major pollen allergen Lol p 5a</fullName>
    </recommendedName>
    <alternativeName>
        <fullName>Allergen Lol p Ib</fullName>
    </alternativeName>
    <alternativeName>
        <fullName>Allergen Lol p Va</fullName>
    </alternativeName>
    <allergenName>Lol p 5a</allergenName>
</protein>
<feature type="signal peptide" evidence="1">
    <location>
        <begin position="1"/>
        <end position="25"/>
    </location>
</feature>
<feature type="chain" id="PRO_0000021743" description="Major pollen allergen Lol p 5a">
    <location>
        <begin position="26"/>
        <end position="307"/>
    </location>
</feature>
<proteinExistence type="evidence at protein level"/>
<evidence type="ECO:0000255" key="1"/>
<evidence type="ECO:0000305" key="2"/>
<organism>
    <name type="scientific">Lolium perenne</name>
    <name type="common">Perennial ryegrass</name>
    <dbReference type="NCBI Taxonomy" id="4522"/>
    <lineage>
        <taxon>Eukaryota</taxon>
        <taxon>Viridiplantae</taxon>
        <taxon>Streptophyta</taxon>
        <taxon>Embryophyta</taxon>
        <taxon>Tracheophyta</taxon>
        <taxon>Spermatophyta</taxon>
        <taxon>Magnoliopsida</taxon>
        <taxon>Liliopsida</taxon>
        <taxon>Poales</taxon>
        <taxon>Poaceae</taxon>
        <taxon>BOP clade</taxon>
        <taxon>Pooideae</taxon>
        <taxon>Poodae</taxon>
        <taxon>Poeae</taxon>
        <taxon>Poeae Chloroplast Group 2 (Poeae type)</taxon>
        <taxon>Loliodinae</taxon>
        <taxon>Loliinae</taxon>
        <taxon>Lolium</taxon>
    </lineage>
</organism>